<accession>Q46EL9</accession>
<organism>
    <name type="scientific">Methanosarcina barkeri (strain Fusaro / DSM 804)</name>
    <dbReference type="NCBI Taxonomy" id="269797"/>
    <lineage>
        <taxon>Archaea</taxon>
        <taxon>Methanobacteriati</taxon>
        <taxon>Methanobacteriota</taxon>
        <taxon>Stenosarchaea group</taxon>
        <taxon>Methanomicrobia</taxon>
        <taxon>Methanosarcinales</taxon>
        <taxon>Methanosarcinaceae</taxon>
        <taxon>Methanosarcina</taxon>
    </lineage>
</organism>
<feature type="chain" id="PRO_0000259437" description="Translation initiation factor 5A">
    <location>
        <begin position="1"/>
        <end position="128"/>
    </location>
</feature>
<feature type="modified residue" description="Hypusine" evidence="1">
    <location>
        <position position="35"/>
    </location>
</feature>
<dbReference type="EMBL" id="CP000099">
    <property type="protein sequence ID" value="AAZ69673.1"/>
    <property type="molecule type" value="Genomic_DNA"/>
</dbReference>
<dbReference type="SMR" id="Q46EL9"/>
<dbReference type="STRING" id="269797.Mbar_A0695"/>
<dbReference type="PaxDb" id="269797-Mbar_A0695"/>
<dbReference type="KEGG" id="mba:Mbar_A0695"/>
<dbReference type="eggNOG" id="arCOG04277">
    <property type="taxonomic scope" value="Archaea"/>
</dbReference>
<dbReference type="HOGENOM" id="CLU_102600_3_0_2"/>
<dbReference type="OrthoDB" id="23689at2157"/>
<dbReference type="GO" id="GO:0005737">
    <property type="term" value="C:cytoplasm"/>
    <property type="evidence" value="ECO:0007669"/>
    <property type="project" value="UniProtKB-SubCell"/>
</dbReference>
<dbReference type="GO" id="GO:0043022">
    <property type="term" value="F:ribosome binding"/>
    <property type="evidence" value="ECO:0007669"/>
    <property type="project" value="InterPro"/>
</dbReference>
<dbReference type="GO" id="GO:0003723">
    <property type="term" value="F:RNA binding"/>
    <property type="evidence" value="ECO:0007669"/>
    <property type="project" value="InterPro"/>
</dbReference>
<dbReference type="GO" id="GO:0003746">
    <property type="term" value="F:translation elongation factor activity"/>
    <property type="evidence" value="ECO:0007669"/>
    <property type="project" value="InterPro"/>
</dbReference>
<dbReference type="GO" id="GO:0003743">
    <property type="term" value="F:translation initiation factor activity"/>
    <property type="evidence" value="ECO:0007669"/>
    <property type="project" value="UniProtKB-UniRule"/>
</dbReference>
<dbReference type="GO" id="GO:0045901">
    <property type="term" value="P:positive regulation of translational elongation"/>
    <property type="evidence" value="ECO:0007669"/>
    <property type="project" value="InterPro"/>
</dbReference>
<dbReference type="GO" id="GO:0045905">
    <property type="term" value="P:positive regulation of translational termination"/>
    <property type="evidence" value="ECO:0007669"/>
    <property type="project" value="InterPro"/>
</dbReference>
<dbReference type="CDD" id="cd04467">
    <property type="entry name" value="S1_aIF5A"/>
    <property type="match status" value="1"/>
</dbReference>
<dbReference type="FunFam" id="2.30.30.30:FF:000038">
    <property type="entry name" value="Translation initiation factor 5A"/>
    <property type="match status" value="1"/>
</dbReference>
<dbReference type="FunFam" id="2.40.50.140:FF:000447">
    <property type="entry name" value="Translation initiation factor 5A"/>
    <property type="match status" value="1"/>
</dbReference>
<dbReference type="Gene3D" id="2.30.30.30">
    <property type="match status" value="1"/>
</dbReference>
<dbReference type="Gene3D" id="2.40.50.140">
    <property type="entry name" value="Nucleic acid-binding proteins"/>
    <property type="match status" value="1"/>
</dbReference>
<dbReference type="HAMAP" id="MF_00085">
    <property type="entry name" value="eIF_5A"/>
    <property type="match status" value="1"/>
</dbReference>
<dbReference type="InterPro" id="IPR001884">
    <property type="entry name" value="IF5A-like"/>
</dbReference>
<dbReference type="InterPro" id="IPR048670">
    <property type="entry name" value="IF5A-like_N"/>
</dbReference>
<dbReference type="InterPro" id="IPR012340">
    <property type="entry name" value="NA-bd_OB-fold"/>
</dbReference>
<dbReference type="InterPro" id="IPR014722">
    <property type="entry name" value="Rib_uL2_dom2"/>
</dbReference>
<dbReference type="InterPro" id="IPR019769">
    <property type="entry name" value="Trans_elong_IF5A_hypusine_site"/>
</dbReference>
<dbReference type="InterPro" id="IPR022847">
    <property type="entry name" value="Transl_elong_IF5A_arc"/>
</dbReference>
<dbReference type="InterPro" id="IPR020189">
    <property type="entry name" value="Transl_elong_IF5A_C"/>
</dbReference>
<dbReference type="InterPro" id="IPR008991">
    <property type="entry name" value="Translation_prot_SH3-like_sf"/>
</dbReference>
<dbReference type="NCBIfam" id="TIGR00037">
    <property type="entry name" value="eIF_5A"/>
    <property type="match status" value="1"/>
</dbReference>
<dbReference type="NCBIfam" id="NF003076">
    <property type="entry name" value="PRK03999.1"/>
    <property type="match status" value="1"/>
</dbReference>
<dbReference type="PANTHER" id="PTHR11673">
    <property type="entry name" value="TRANSLATION INITIATION FACTOR 5A FAMILY MEMBER"/>
    <property type="match status" value="1"/>
</dbReference>
<dbReference type="Pfam" id="PF01287">
    <property type="entry name" value="eIF-5a"/>
    <property type="match status" value="1"/>
</dbReference>
<dbReference type="Pfam" id="PF21485">
    <property type="entry name" value="IF5A-like_N"/>
    <property type="match status" value="1"/>
</dbReference>
<dbReference type="PIRSF" id="PIRSF003025">
    <property type="entry name" value="eIF5A"/>
    <property type="match status" value="1"/>
</dbReference>
<dbReference type="SMART" id="SM01376">
    <property type="entry name" value="eIF-5a"/>
    <property type="match status" value="1"/>
</dbReference>
<dbReference type="SUPFAM" id="SSF50249">
    <property type="entry name" value="Nucleic acid-binding proteins"/>
    <property type="match status" value="1"/>
</dbReference>
<dbReference type="SUPFAM" id="SSF50104">
    <property type="entry name" value="Translation proteins SH3-like domain"/>
    <property type="match status" value="1"/>
</dbReference>
<dbReference type="PROSITE" id="PS00302">
    <property type="entry name" value="IF5A_HYPUSINE"/>
    <property type="match status" value="1"/>
</dbReference>
<evidence type="ECO:0000255" key="1">
    <source>
        <dbReference type="HAMAP-Rule" id="MF_00085"/>
    </source>
</evidence>
<comment type="function">
    <text evidence="1">Functions by promoting the formation of the first peptide bond.</text>
</comment>
<comment type="subcellular location">
    <subcellularLocation>
        <location evidence="1">Cytoplasm</location>
    </subcellularLocation>
</comment>
<comment type="similarity">
    <text evidence="1">Belongs to the eIF-5A family.</text>
</comment>
<sequence>MKQQVEVKELKEGKYVIIDDEACVIKSITKSKPGKHGAAKARVEAIGLFDGQKRSYIGSVANKIYVPIVERKTAQVISITGDITQLMDMGDFSTFEIVVPDEYKDKIKEGEEVSYITALGKIKLDIRT</sequence>
<proteinExistence type="inferred from homology"/>
<name>IF5A_METBF</name>
<protein>
    <recommendedName>
        <fullName evidence="1">Translation initiation factor 5A</fullName>
    </recommendedName>
    <alternativeName>
        <fullName evidence="1">Hypusine-containing protein</fullName>
    </alternativeName>
    <alternativeName>
        <fullName evidence="1">eIF-5A</fullName>
    </alternativeName>
</protein>
<reference key="1">
    <citation type="journal article" date="2006" name="J. Bacteriol.">
        <title>The Methanosarcina barkeri genome: comparative analysis with Methanosarcina acetivorans and Methanosarcina mazei reveals extensive rearrangement within methanosarcinal genomes.</title>
        <authorList>
            <person name="Maeder D.L."/>
            <person name="Anderson I."/>
            <person name="Brettin T.S."/>
            <person name="Bruce D.C."/>
            <person name="Gilna P."/>
            <person name="Han C.S."/>
            <person name="Lapidus A."/>
            <person name="Metcalf W.W."/>
            <person name="Saunders E."/>
            <person name="Tapia R."/>
            <person name="Sowers K.R."/>
        </authorList>
    </citation>
    <scope>NUCLEOTIDE SEQUENCE [LARGE SCALE GENOMIC DNA]</scope>
    <source>
        <strain>Fusaro / DSM 804</strain>
    </source>
</reference>
<keyword id="KW-0963">Cytoplasm</keyword>
<keyword id="KW-0385">Hypusine</keyword>
<keyword id="KW-0396">Initiation factor</keyword>
<keyword id="KW-0648">Protein biosynthesis</keyword>
<gene>
    <name evidence="1" type="primary">eif5a</name>
    <name type="ordered locus">Mbar_A0695</name>
</gene>